<sequence>MSSAVVTRFAPSPTGYLHIGGARTALFNWLYARHTGGKMLLRIEDTDRERSTKGAIDAILDGLSWLGLDWDGDVVFQFARAERHRAVAEELLAAGRAYHCYATAEELAQMRETARAEGRAPRYDGRWRDRDPSEAPAGVKPVIRLRAPIEGETVVEDAVQGRVTWANKDLDDLVLLRSDGTPTYMLAVVVDDHDMGVTQIIRGDDHLTNAARQSQIFSALGWDVPRMAHIPLIHGADGAKLSKRHGALGVEAYRDLGYLPAALRNYLVRLGWSHGDQEVFSTEEMVAAFDLGAVGRSAARFDFAKLANLNGLYIRTSADADLVAAIETILPNVGPERGLSAPLQPDLKDKLIQAMPGLKERAKTLIELLDSAYYLYAQRPLALDDKARALLSDEGRGRLAGVRPVLEALPDWSAASTEGAVRQYAESAGCKLGQVAQPLRAALTGRTTSPPLFDVMAVLGREETLARLGDQAPQG</sequence>
<accession>B1LUJ9</accession>
<feature type="chain" id="PRO_1000090089" description="Glutamate--tRNA ligase 1">
    <location>
        <begin position="1"/>
        <end position="475"/>
    </location>
</feature>
<feature type="short sequence motif" description="'HIGH' region" evidence="1">
    <location>
        <begin position="11"/>
        <end position="21"/>
    </location>
</feature>
<feature type="short sequence motif" description="'KMSKS' region" evidence="1">
    <location>
        <begin position="240"/>
        <end position="244"/>
    </location>
</feature>
<feature type="binding site" evidence="1">
    <location>
        <position position="243"/>
    </location>
    <ligand>
        <name>ATP</name>
        <dbReference type="ChEBI" id="CHEBI:30616"/>
    </ligand>
</feature>
<gene>
    <name evidence="1" type="primary">gltX1</name>
    <name type="ordered locus">Mrad2831_2022</name>
</gene>
<organism>
    <name type="scientific">Methylobacterium radiotolerans (strain ATCC 27329 / DSM 1819 / JCM 2831 / NBRC 15690 / NCIMB 10815 / 0-1)</name>
    <dbReference type="NCBI Taxonomy" id="426355"/>
    <lineage>
        <taxon>Bacteria</taxon>
        <taxon>Pseudomonadati</taxon>
        <taxon>Pseudomonadota</taxon>
        <taxon>Alphaproteobacteria</taxon>
        <taxon>Hyphomicrobiales</taxon>
        <taxon>Methylobacteriaceae</taxon>
        <taxon>Methylobacterium</taxon>
    </lineage>
</organism>
<name>SYE1_METRJ</name>
<protein>
    <recommendedName>
        <fullName evidence="1">Glutamate--tRNA ligase 1</fullName>
        <ecNumber evidence="1">6.1.1.17</ecNumber>
    </recommendedName>
    <alternativeName>
        <fullName evidence="1">Glutamyl-tRNA synthetase 1</fullName>
        <shortName evidence="1">GluRS 1</shortName>
    </alternativeName>
</protein>
<keyword id="KW-0030">Aminoacyl-tRNA synthetase</keyword>
<keyword id="KW-0067">ATP-binding</keyword>
<keyword id="KW-0963">Cytoplasm</keyword>
<keyword id="KW-0436">Ligase</keyword>
<keyword id="KW-0547">Nucleotide-binding</keyword>
<keyword id="KW-0648">Protein biosynthesis</keyword>
<dbReference type="EC" id="6.1.1.17" evidence="1"/>
<dbReference type="EMBL" id="CP001001">
    <property type="protein sequence ID" value="ACB24017.1"/>
    <property type="molecule type" value="Genomic_DNA"/>
</dbReference>
<dbReference type="RefSeq" id="WP_012319001.1">
    <property type="nucleotide sequence ID" value="NC_010505.1"/>
</dbReference>
<dbReference type="SMR" id="B1LUJ9"/>
<dbReference type="STRING" id="426355.Mrad2831_2022"/>
<dbReference type="GeneID" id="6138051"/>
<dbReference type="KEGG" id="mrd:Mrad2831_2022"/>
<dbReference type="PATRIC" id="fig|426355.14.peg.2080"/>
<dbReference type="eggNOG" id="COG0008">
    <property type="taxonomic scope" value="Bacteria"/>
</dbReference>
<dbReference type="HOGENOM" id="CLU_015768_6_3_5"/>
<dbReference type="OrthoDB" id="9807503at2"/>
<dbReference type="Proteomes" id="UP000006589">
    <property type="component" value="Chromosome"/>
</dbReference>
<dbReference type="GO" id="GO:0005829">
    <property type="term" value="C:cytosol"/>
    <property type="evidence" value="ECO:0007669"/>
    <property type="project" value="TreeGrafter"/>
</dbReference>
<dbReference type="GO" id="GO:0005524">
    <property type="term" value="F:ATP binding"/>
    <property type="evidence" value="ECO:0007669"/>
    <property type="project" value="UniProtKB-UniRule"/>
</dbReference>
<dbReference type="GO" id="GO:0004818">
    <property type="term" value="F:glutamate-tRNA ligase activity"/>
    <property type="evidence" value="ECO:0007669"/>
    <property type="project" value="UniProtKB-UniRule"/>
</dbReference>
<dbReference type="GO" id="GO:0000049">
    <property type="term" value="F:tRNA binding"/>
    <property type="evidence" value="ECO:0007669"/>
    <property type="project" value="InterPro"/>
</dbReference>
<dbReference type="GO" id="GO:0008270">
    <property type="term" value="F:zinc ion binding"/>
    <property type="evidence" value="ECO:0007669"/>
    <property type="project" value="InterPro"/>
</dbReference>
<dbReference type="GO" id="GO:0006424">
    <property type="term" value="P:glutamyl-tRNA aminoacylation"/>
    <property type="evidence" value="ECO:0007669"/>
    <property type="project" value="UniProtKB-UniRule"/>
</dbReference>
<dbReference type="CDD" id="cd00808">
    <property type="entry name" value="GluRS_core"/>
    <property type="match status" value="1"/>
</dbReference>
<dbReference type="FunFam" id="3.40.50.620:FF:000007">
    <property type="entry name" value="Glutamate--tRNA ligase"/>
    <property type="match status" value="1"/>
</dbReference>
<dbReference type="Gene3D" id="1.10.10.350">
    <property type="match status" value="1"/>
</dbReference>
<dbReference type="Gene3D" id="3.40.50.620">
    <property type="entry name" value="HUPs"/>
    <property type="match status" value="1"/>
</dbReference>
<dbReference type="HAMAP" id="MF_00022">
    <property type="entry name" value="Glu_tRNA_synth_type1"/>
    <property type="match status" value="1"/>
</dbReference>
<dbReference type="InterPro" id="IPR045462">
    <property type="entry name" value="aa-tRNA-synth_I_cd-bd"/>
</dbReference>
<dbReference type="InterPro" id="IPR020751">
    <property type="entry name" value="aa-tRNA-synth_I_codon-bd_sub2"/>
</dbReference>
<dbReference type="InterPro" id="IPR001412">
    <property type="entry name" value="aa-tRNA-synth_I_CS"/>
</dbReference>
<dbReference type="InterPro" id="IPR008925">
    <property type="entry name" value="aa_tRNA-synth_I_cd-bd_sf"/>
</dbReference>
<dbReference type="InterPro" id="IPR004527">
    <property type="entry name" value="Glu-tRNA-ligase_bac/mito"/>
</dbReference>
<dbReference type="InterPro" id="IPR000924">
    <property type="entry name" value="Glu/Gln-tRNA-synth"/>
</dbReference>
<dbReference type="InterPro" id="IPR020058">
    <property type="entry name" value="Glu/Gln-tRNA-synth_Ib_cat-dom"/>
</dbReference>
<dbReference type="InterPro" id="IPR049940">
    <property type="entry name" value="GluQ/Sye"/>
</dbReference>
<dbReference type="InterPro" id="IPR033910">
    <property type="entry name" value="GluRS_core"/>
</dbReference>
<dbReference type="InterPro" id="IPR014729">
    <property type="entry name" value="Rossmann-like_a/b/a_fold"/>
</dbReference>
<dbReference type="NCBIfam" id="TIGR00464">
    <property type="entry name" value="gltX_bact"/>
    <property type="match status" value="1"/>
</dbReference>
<dbReference type="PANTHER" id="PTHR43311">
    <property type="entry name" value="GLUTAMATE--TRNA LIGASE"/>
    <property type="match status" value="1"/>
</dbReference>
<dbReference type="PANTHER" id="PTHR43311:SF2">
    <property type="entry name" value="GLUTAMATE--TRNA LIGASE, MITOCHONDRIAL-RELATED"/>
    <property type="match status" value="1"/>
</dbReference>
<dbReference type="Pfam" id="PF19269">
    <property type="entry name" value="Anticodon_2"/>
    <property type="match status" value="1"/>
</dbReference>
<dbReference type="Pfam" id="PF00749">
    <property type="entry name" value="tRNA-synt_1c"/>
    <property type="match status" value="1"/>
</dbReference>
<dbReference type="PRINTS" id="PR00987">
    <property type="entry name" value="TRNASYNTHGLU"/>
</dbReference>
<dbReference type="SUPFAM" id="SSF48163">
    <property type="entry name" value="An anticodon-binding domain of class I aminoacyl-tRNA synthetases"/>
    <property type="match status" value="1"/>
</dbReference>
<dbReference type="SUPFAM" id="SSF52374">
    <property type="entry name" value="Nucleotidylyl transferase"/>
    <property type="match status" value="1"/>
</dbReference>
<dbReference type="PROSITE" id="PS00178">
    <property type="entry name" value="AA_TRNA_LIGASE_I"/>
    <property type="match status" value="1"/>
</dbReference>
<comment type="function">
    <text evidence="1">Catalyzes the attachment of glutamate to tRNA(Glu) in a two-step reaction: glutamate is first activated by ATP to form Glu-AMP and then transferred to the acceptor end of tRNA(Glu).</text>
</comment>
<comment type="catalytic activity">
    <reaction evidence="1">
        <text>tRNA(Glu) + L-glutamate + ATP = L-glutamyl-tRNA(Glu) + AMP + diphosphate</text>
        <dbReference type="Rhea" id="RHEA:23540"/>
        <dbReference type="Rhea" id="RHEA-COMP:9663"/>
        <dbReference type="Rhea" id="RHEA-COMP:9680"/>
        <dbReference type="ChEBI" id="CHEBI:29985"/>
        <dbReference type="ChEBI" id="CHEBI:30616"/>
        <dbReference type="ChEBI" id="CHEBI:33019"/>
        <dbReference type="ChEBI" id="CHEBI:78442"/>
        <dbReference type="ChEBI" id="CHEBI:78520"/>
        <dbReference type="ChEBI" id="CHEBI:456215"/>
        <dbReference type="EC" id="6.1.1.17"/>
    </reaction>
</comment>
<comment type="subunit">
    <text evidence="1">Monomer.</text>
</comment>
<comment type="subcellular location">
    <subcellularLocation>
        <location evidence="1">Cytoplasm</location>
    </subcellularLocation>
</comment>
<comment type="similarity">
    <text evidence="1">Belongs to the class-I aminoacyl-tRNA synthetase family. Glutamate--tRNA ligase type 1 subfamily.</text>
</comment>
<evidence type="ECO:0000255" key="1">
    <source>
        <dbReference type="HAMAP-Rule" id="MF_00022"/>
    </source>
</evidence>
<proteinExistence type="inferred from homology"/>
<reference key="1">
    <citation type="submission" date="2008-03" db="EMBL/GenBank/DDBJ databases">
        <title>Complete sequence of chromosome of Methylobacterium radiotolerans JCM 2831.</title>
        <authorList>
            <consortium name="US DOE Joint Genome Institute"/>
            <person name="Copeland A."/>
            <person name="Lucas S."/>
            <person name="Lapidus A."/>
            <person name="Glavina del Rio T."/>
            <person name="Dalin E."/>
            <person name="Tice H."/>
            <person name="Bruce D."/>
            <person name="Goodwin L."/>
            <person name="Pitluck S."/>
            <person name="Kiss H."/>
            <person name="Brettin T."/>
            <person name="Detter J.C."/>
            <person name="Han C."/>
            <person name="Kuske C.R."/>
            <person name="Schmutz J."/>
            <person name="Larimer F."/>
            <person name="Land M."/>
            <person name="Hauser L."/>
            <person name="Kyrpides N."/>
            <person name="Mikhailova N."/>
            <person name="Marx C.J."/>
            <person name="Richardson P."/>
        </authorList>
    </citation>
    <scope>NUCLEOTIDE SEQUENCE [LARGE SCALE GENOMIC DNA]</scope>
    <source>
        <strain>ATCC 27329 / DSM 1819 / JCM 2831 / NBRC 15690 / NCIMB 10815 / 0-1</strain>
    </source>
</reference>